<organism>
    <name type="scientific">Ehrlichia ruminantium (strain Welgevonden)</name>
    <dbReference type="NCBI Taxonomy" id="254945"/>
    <lineage>
        <taxon>Bacteria</taxon>
        <taxon>Pseudomonadati</taxon>
        <taxon>Pseudomonadota</taxon>
        <taxon>Alphaproteobacteria</taxon>
        <taxon>Rickettsiales</taxon>
        <taxon>Anaplasmataceae</taxon>
        <taxon>Ehrlichia</taxon>
    </lineage>
</organism>
<evidence type="ECO:0000255" key="1">
    <source>
        <dbReference type="HAMAP-Rule" id="MF_01187"/>
    </source>
</evidence>
<protein>
    <recommendedName>
        <fullName evidence="1">UPF0434 protein Erum1340/ERWE_CDS_01300</fullName>
    </recommendedName>
</protein>
<gene>
    <name type="ordered locus">Erum1340</name>
    <name type="ordered locus">ERWE_CDS_01300</name>
</gene>
<sequence>MIDKKLLEILVCPLTKEKLEYNKDTNELISQKAKLAFPIRNGIPIMLVDEARKLE</sequence>
<dbReference type="EMBL" id="CR767821">
    <property type="protein sequence ID" value="CAH57850.1"/>
    <property type="molecule type" value="Genomic_DNA"/>
</dbReference>
<dbReference type="EMBL" id="CR925678">
    <property type="protein sequence ID" value="CAI26624.1"/>
    <property type="molecule type" value="Genomic_DNA"/>
</dbReference>
<dbReference type="RefSeq" id="WP_011154818.1">
    <property type="nucleotide sequence ID" value="NC_005295.2"/>
</dbReference>
<dbReference type="SMR" id="Q5HC42"/>
<dbReference type="GeneID" id="33057523"/>
<dbReference type="KEGG" id="eru:Erum1340"/>
<dbReference type="KEGG" id="erw:ERWE_CDS_01300"/>
<dbReference type="eggNOG" id="COG2835">
    <property type="taxonomic scope" value="Bacteria"/>
</dbReference>
<dbReference type="HOGENOM" id="CLU_155659_2_2_5"/>
<dbReference type="Proteomes" id="UP000001021">
    <property type="component" value="Chromosome"/>
</dbReference>
<dbReference type="GO" id="GO:0005829">
    <property type="term" value="C:cytosol"/>
    <property type="evidence" value="ECO:0007669"/>
    <property type="project" value="TreeGrafter"/>
</dbReference>
<dbReference type="FunFam" id="2.20.25.10:FF:000002">
    <property type="entry name" value="UPF0434 protein YcaR"/>
    <property type="match status" value="1"/>
</dbReference>
<dbReference type="Gene3D" id="2.20.25.10">
    <property type="match status" value="1"/>
</dbReference>
<dbReference type="HAMAP" id="MF_01187">
    <property type="entry name" value="UPF0434"/>
    <property type="match status" value="1"/>
</dbReference>
<dbReference type="InterPro" id="IPR005651">
    <property type="entry name" value="Trm112-like"/>
</dbReference>
<dbReference type="PANTHER" id="PTHR33505:SF4">
    <property type="entry name" value="PROTEIN PREY, MITOCHONDRIAL"/>
    <property type="match status" value="1"/>
</dbReference>
<dbReference type="PANTHER" id="PTHR33505">
    <property type="entry name" value="ZGC:162634"/>
    <property type="match status" value="1"/>
</dbReference>
<dbReference type="Pfam" id="PF03966">
    <property type="entry name" value="Trm112p"/>
    <property type="match status" value="1"/>
</dbReference>
<dbReference type="SUPFAM" id="SSF158997">
    <property type="entry name" value="Trm112p-like"/>
    <property type="match status" value="1"/>
</dbReference>
<accession>Q5HC42</accession>
<accession>Q5FCR0</accession>
<name>Y130_EHRRW</name>
<proteinExistence type="inferred from homology"/>
<comment type="similarity">
    <text evidence="1">Belongs to the UPF0434 family.</text>
</comment>
<feature type="chain" id="PRO_0000291088" description="UPF0434 protein Erum1340/ERWE_CDS_01300">
    <location>
        <begin position="1"/>
        <end position="55"/>
    </location>
</feature>
<reference key="1">
    <citation type="journal article" date="2005" name="Proc. Natl. Acad. Sci. U.S.A.">
        <title>The genome of the heartwater agent Ehrlichia ruminantium contains multiple tandem repeats of actively variable copy number.</title>
        <authorList>
            <person name="Collins N.E."/>
            <person name="Liebenberg J."/>
            <person name="de Villiers E.P."/>
            <person name="Brayton K.A."/>
            <person name="Louw E."/>
            <person name="Pretorius A."/>
            <person name="Faber F.E."/>
            <person name="van Heerden H."/>
            <person name="Josemans A."/>
            <person name="van Kleef M."/>
            <person name="Steyn H.C."/>
            <person name="van Strijp M.F."/>
            <person name="Zweygarth E."/>
            <person name="Jongejan F."/>
            <person name="Maillard J.C."/>
            <person name="Berthier D."/>
            <person name="Botha M."/>
            <person name="Joubert F."/>
            <person name="Corton C.H."/>
            <person name="Thomson N.R."/>
            <person name="Allsopp M.T."/>
            <person name="Allsopp B.A."/>
        </authorList>
    </citation>
    <scope>NUCLEOTIDE SEQUENCE [LARGE SCALE GENOMIC DNA]</scope>
    <source>
        <strain>Welgevonden</strain>
    </source>
</reference>
<reference key="2">
    <citation type="journal article" date="2006" name="J. Bacteriol.">
        <title>Comparative genomic analysis of three strains of Ehrlichia ruminantium reveals an active process of genome size plasticity.</title>
        <authorList>
            <person name="Frutos R."/>
            <person name="Viari A."/>
            <person name="Ferraz C."/>
            <person name="Morgat A."/>
            <person name="Eychenie S."/>
            <person name="Kandassamy Y."/>
            <person name="Chantal I."/>
            <person name="Bensaid A."/>
            <person name="Coissac E."/>
            <person name="Vachiery N."/>
            <person name="Demaille J."/>
            <person name="Martinez D."/>
        </authorList>
    </citation>
    <scope>NUCLEOTIDE SEQUENCE [LARGE SCALE GENOMIC DNA]</scope>
    <source>
        <strain>Welgevonden</strain>
    </source>
</reference>